<proteinExistence type="evidence at protein level"/>
<sequence>ANRNEKLDFLGEGQFATVYKARDKNTNQIVAIKKIKLGHRSEAKDGINRTALREIKLLQELSHPNIIGLLDAFGHKSNISLVFDFMETDLEVIIKDNSLVLTPSHIKAYMLMTLQGLEYLHQHWILHRDLKPNNLLLDENGVLKLADFGLAKSFGSPNWAYTHQVVTRWYRAPELLFGARMYGVGVDMWAVGCILAELLLRVPFLPGDSDLDQLTRIFETLGTPTEEQWPDMCSLPDYVTFKSFPGIPLQHIFIAAGDDLLELIQGLFLFNPCTRITASQALRTKYFSNRPGPTPGCQLPRPNCPVEALKEQSNPAMATKRKRAEALEQ</sequence>
<accession>P51952</accession>
<keyword id="KW-0067">ATP-binding</keyword>
<keyword id="KW-0131">Cell cycle</keyword>
<keyword id="KW-0132">Cell division</keyword>
<keyword id="KW-0963">Cytoplasm</keyword>
<keyword id="KW-0227">DNA damage</keyword>
<keyword id="KW-0234">DNA repair</keyword>
<keyword id="KW-0418">Kinase</keyword>
<keyword id="KW-0469">Meiosis</keyword>
<keyword id="KW-0547">Nucleotide-binding</keyword>
<keyword id="KW-0539">Nucleus</keyword>
<keyword id="KW-0597">Phosphoprotein</keyword>
<keyword id="KW-1185">Reference proteome</keyword>
<keyword id="KW-0723">Serine/threonine-protein kinase</keyword>
<keyword id="KW-0804">Transcription</keyword>
<keyword id="KW-0805">Transcription regulation</keyword>
<keyword id="KW-0808">Transferase</keyword>
<protein>
    <recommendedName>
        <fullName>Cyclin-dependent kinase 7</fullName>
        <ecNumber>2.7.11.22</ecNumber>
        <ecNumber>2.7.11.23</ecNumber>
    </recommendedName>
    <alternativeName>
        <fullName>39 protein kinase</fullName>
        <shortName>P39 Mo15</shortName>
    </alternativeName>
    <alternativeName>
        <fullName>CDK-activating kinase 1</fullName>
    </alternativeName>
    <alternativeName>
        <fullName>Cell division protein kinase 7</fullName>
    </alternativeName>
    <alternativeName>
        <fullName>TFIIH basal transcription factor complex kinase subunit</fullName>
    </alternativeName>
</protein>
<evidence type="ECO:0000250" key="1"/>
<evidence type="ECO:0000250" key="2">
    <source>
        <dbReference type="UniProtKB" id="P50613"/>
    </source>
</evidence>
<evidence type="ECO:0000255" key="3">
    <source>
        <dbReference type="PROSITE-ProRule" id="PRU00159"/>
    </source>
</evidence>
<evidence type="ECO:0000255" key="4">
    <source>
        <dbReference type="PROSITE-ProRule" id="PRU10027"/>
    </source>
</evidence>
<evidence type="ECO:0000256" key="5">
    <source>
        <dbReference type="SAM" id="MobiDB-lite"/>
    </source>
</evidence>
<evidence type="ECO:0000305" key="6"/>
<evidence type="ECO:0007744" key="7">
    <source>
    </source>
</evidence>
<dbReference type="EC" id="2.7.11.22"/>
<dbReference type="EC" id="2.7.11.23"/>
<dbReference type="EMBL" id="X83579">
    <property type="protein sequence ID" value="CAA58562.1"/>
    <property type="status" value="ALT_SEQ"/>
    <property type="molecule type" value="mRNA"/>
</dbReference>
<dbReference type="PIR" id="S51085">
    <property type="entry name" value="S51085"/>
</dbReference>
<dbReference type="SMR" id="P51952"/>
<dbReference type="FunCoup" id="P51952">
    <property type="interactions" value="3056"/>
</dbReference>
<dbReference type="STRING" id="10116.ENSRNOP00000025026"/>
<dbReference type="GlyGen" id="P51952">
    <property type="glycosylation" value="1 site"/>
</dbReference>
<dbReference type="iPTMnet" id="P51952"/>
<dbReference type="PhosphoSitePlus" id="P51952"/>
<dbReference type="jPOST" id="P51952"/>
<dbReference type="PaxDb" id="10116-ENSRNOP00000025026"/>
<dbReference type="UCSC" id="RGD:621124">
    <property type="organism name" value="rat"/>
</dbReference>
<dbReference type="AGR" id="RGD:621124"/>
<dbReference type="RGD" id="621124">
    <property type="gene designation" value="Cdk7"/>
</dbReference>
<dbReference type="eggNOG" id="KOG0659">
    <property type="taxonomic scope" value="Eukaryota"/>
</dbReference>
<dbReference type="InParanoid" id="P51952"/>
<dbReference type="PhylomeDB" id="P51952"/>
<dbReference type="Reactome" id="R-RNO-112382">
    <property type="pathway name" value="Formation of RNA Pol II elongation complex"/>
</dbReference>
<dbReference type="Reactome" id="R-RNO-113418">
    <property type="pathway name" value="Formation of the Early Elongation Complex"/>
</dbReference>
<dbReference type="Reactome" id="R-RNO-5696395">
    <property type="pathway name" value="Formation of Incision Complex in GG-NER"/>
</dbReference>
<dbReference type="Reactome" id="R-RNO-674695">
    <property type="pathway name" value="RNA Polymerase II Pre-transcription Events"/>
</dbReference>
<dbReference type="Reactome" id="R-RNO-6781823">
    <property type="pathway name" value="Formation of TC-NER Pre-Incision Complex"/>
</dbReference>
<dbReference type="Reactome" id="R-RNO-6782135">
    <property type="pathway name" value="Dual incision in TC-NER"/>
</dbReference>
<dbReference type="Reactome" id="R-RNO-6782210">
    <property type="pathway name" value="Gap-filling DNA repair synthesis and ligation in TC-NER"/>
</dbReference>
<dbReference type="Reactome" id="R-RNO-6796648">
    <property type="pathway name" value="TP53 Regulates Transcription of DNA Repair Genes"/>
</dbReference>
<dbReference type="Reactome" id="R-RNO-6807505">
    <property type="pathway name" value="RNA polymerase II transcribes snRNA genes"/>
</dbReference>
<dbReference type="Reactome" id="R-RNO-69202">
    <property type="pathway name" value="Cyclin E associated events during G1/S transition"/>
</dbReference>
<dbReference type="Reactome" id="R-RNO-69231">
    <property type="pathway name" value="Cyclin D associated events in G1"/>
</dbReference>
<dbReference type="Reactome" id="R-RNO-69273">
    <property type="pathway name" value="Cyclin A/B1/B2 associated events during G2/M transition"/>
</dbReference>
<dbReference type="Reactome" id="R-RNO-69656">
    <property type="pathway name" value="Cyclin A:Cdk2-associated events at S phase entry"/>
</dbReference>
<dbReference type="Reactome" id="R-RNO-72086">
    <property type="pathway name" value="mRNA Capping"/>
</dbReference>
<dbReference type="Reactome" id="R-RNO-73762">
    <property type="pathway name" value="RNA Polymerase I Transcription Initiation"/>
</dbReference>
<dbReference type="Reactome" id="R-RNO-73772">
    <property type="pathway name" value="RNA Polymerase I Promoter Escape"/>
</dbReference>
<dbReference type="Reactome" id="R-RNO-73776">
    <property type="pathway name" value="RNA Polymerase II Promoter Escape"/>
</dbReference>
<dbReference type="Reactome" id="R-RNO-73779">
    <property type="pathway name" value="RNA Polymerase II Transcription Pre-Initiation And Promoter Opening"/>
</dbReference>
<dbReference type="Reactome" id="R-RNO-73863">
    <property type="pathway name" value="RNA Polymerase I Transcription Termination"/>
</dbReference>
<dbReference type="Reactome" id="R-RNO-75953">
    <property type="pathway name" value="RNA Polymerase II Transcription Initiation"/>
</dbReference>
<dbReference type="Reactome" id="R-RNO-75955">
    <property type="pathway name" value="RNA Polymerase II Transcription Elongation"/>
</dbReference>
<dbReference type="Reactome" id="R-RNO-76042">
    <property type="pathway name" value="RNA Polymerase II Transcription Initiation And Promoter Clearance"/>
</dbReference>
<dbReference type="Reactome" id="R-RNO-77075">
    <property type="pathway name" value="RNA Pol II CTD phosphorylation and interaction with CE"/>
</dbReference>
<dbReference type="Reactome" id="R-RNO-8939236">
    <property type="pathway name" value="RUNX1 regulates transcription of genes involved in differentiation of HSCs"/>
</dbReference>
<dbReference type="Proteomes" id="UP000002494">
    <property type="component" value="Unplaced"/>
</dbReference>
<dbReference type="GO" id="GO:0070516">
    <property type="term" value="C:CAK-ERCC2 complex"/>
    <property type="evidence" value="ECO:0000266"/>
    <property type="project" value="RGD"/>
</dbReference>
<dbReference type="GO" id="GO:0000307">
    <property type="term" value="C:cyclin-dependent protein kinase holoenzyme complex"/>
    <property type="evidence" value="ECO:0000266"/>
    <property type="project" value="RGD"/>
</dbReference>
<dbReference type="GO" id="GO:0005737">
    <property type="term" value="C:cytoplasm"/>
    <property type="evidence" value="ECO:0000266"/>
    <property type="project" value="RGD"/>
</dbReference>
<dbReference type="GO" id="GO:0042585">
    <property type="term" value="C:germinal vesicle"/>
    <property type="evidence" value="ECO:0000266"/>
    <property type="project" value="RGD"/>
</dbReference>
<dbReference type="GO" id="GO:0001673">
    <property type="term" value="C:male germ cell nucleus"/>
    <property type="evidence" value="ECO:0000266"/>
    <property type="project" value="RGD"/>
</dbReference>
<dbReference type="GO" id="GO:0005634">
    <property type="term" value="C:nucleus"/>
    <property type="evidence" value="ECO:0000266"/>
    <property type="project" value="RGD"/>
</dbReference>
<dbReference type="GO" id="GO:0048471">
    <property type="term" value="C:perinuclear region of cytoplasm"/>
    <property type="evidence" value="ECO:0007669"/>
    <property type="project" value="UniProtKB-SubCell"/>
</dbReference>
<dbReference type="GO" id="GO:0000439">
    <property type="term" value="C:transcription factor TFIIH core complex"/>
    <property type="evidence" value="ECO:0000266"/>
    <property type="project" value="RGD"/>
</dbReference>
<dbReference type="GO" id="GO:0005675">
    <property type="term" value="C:transcription factor TFIIH holo complex"/>
    <property type="evidence" value="ECO:0000314"/>
    <property type="project" value="RGD"/>
</dbReference>
<dbReference type="GO" id="GO:0070985">
    <property type="term" value="C:transcription factor TFIIK complex"/>
    <property type="evidence" value="ECO:0000266"/>
    <property type="project" value="RGD"/>
</dbReference>
<dbReference type="GO" id="GO:0005524">
    <property type="term" value="F:ATP binding"/>
    <property type="evidence" value="ECO:0007669"/>
    <property type="project" value="UniProtKB-KW"/>
</dbReference>
<dbReference type="GO" id="GO:0008094">
    <property type="term" value="F:ATP-dependent activity, acting on DNA"/>
    <property type="evidence" value="ECO:0000250"/>
    <property type="project" value="UniProtKB"/>
</dbReference>
<dbReference type="GO" id="GO:0004693">
    <property type="term" value="F:cyclin-dependent protein serine/threonine kinase activity"/>
    <property type="evidence" value="ECO:0000314"/>
    <property type="project" value="RGD"/>
</dbReference>
<dbReference type="GO" id="GO:0016301">
    <property type="term" value="F:kinase activity"/>
    <property type="evidence" value="ECO:0000266"/>
    <property type="project" value="RGD"/>
</dbReference>
<dbReference type="GO" id="GO:0004672">
    <property type="term" value="F:protein kinase activity"/>
    <property type="evidence" value="ECO:0000266"/>
    <property type="project" value="RGD"/>
</dbReference>
<dbReference type="GO" id="GO:0106310">
    <property type="term" value="F:protein serine kinase activity"/>
    <property type="evidence" value="ECO:0007669"/>
    <property type="project" value="RHEA"/>
</dbReference>
<dbReference type="GO" id="GO:0044877">
    <property type="term" value="F:protein-containing complex binding"/>
    <property type="evidence" value="ECO:0000314"/>
    <property type="project" value="RGD"/>
</dbReference>
<dbReference type="GO" id="GO:0008353">
    <property type="term" value="F:RNA polymerase II CTD heptapeptide repeat kinase activity"/>
    <property type="evidence" value="ECO:0000250"/>
    <property type="project" value="UniProtKB"/>
</dbReference>
<dbReference type="GO" id="GO:0140836">
    <property type="term" value="F:RNA polymerase II CTD heptapeptide repeat S5 kinase activity"/>
    <property type="evidence" value="ECO:0000250"/>
    <property type="project" value="UniProtKB"/>
</dbReference>
<dbReference type="GO" id="GO:0051301">
    <property type="term" value="P:cell division"/>
    <property type="evidence" value="ECO:0007669"/>
    <property type="project" value="UniProtKB-KW"/>
</dbReference>
<dbReference type="GO" id="GO:0006281">
    <property type="term" value="P:DNA repair"/>
    <property type="evidence" value="ECO:0007669"/>
    <property type="project" value="UniProtKB-KW"/>
</dbReference>
<dbReference type="GO" id="GO:0051321">
    <property type="term" value="P:meiotic cell cycle"/>
    <property type="evidence" value="ECO:0007669"/>
    <property type="project" value="UniProtKB-KW"/>
</dbReference>
<dbReference type="GO" id="GO:1904146">
    <property type="term" value="P:positive regulation of meiotic cell cycle process involved in oocyte maturation"/>
    <property type="evidence" value="ECO:0000266"/>
    <property type="project" value="RGD"/>
</dbReference>
<dbReference type="GO" id="GO:0045944">
    <property type="term" value="P:positive regulation of transcription by RNA polymerase II"/>
    <property type="evidence" value="ECO:0000250"/>
    <property type="project" value="UniProtKB"/>
</dbReference>
<dbReference type="GO" id="GO:0050821">
    <property type="term" value="P:protein stabilization"/>
    <property type="evidence" value="ECO:0000266"/>
    <property type="project" value="RGD"/>
</dbReference>
<dbReference type="GO" id="GO:0051726">
    <property type="term" value="P:regulation of cell cycle"/>
    <property type="evidence" value="ECO:0000318"/>
    <property type="project" value="GO_Central"/>
</dbReference>
<dbReference type="GO" id="GO:2000045">
    <property type="term" value="P:regulation of G1/S transition of mitotic cell cycle"/>
    <property type="evidence" value="ECO:0000266"/>
    <property type="project" value="RGD"/>
</dbReference>
<dbReference type="GO" id="GO:0006366">
    <property type="term" value="P:transcription by RNA polymerase II"/>
    <property type="evidence" value="ECO:0000314"/>
    <property type="project" value="RGD"/>
</dbReference>
<dbReference type="GO" id="GO:0006367">
    <property type="term" value="P:transcription initiation at RNA polymerase II promoter"/>
    <property type="evidence" value="ECO:0000250"/>
    <property type="project" value="UniProtKB"/>
</dbReference>
<dbReference type="CDD" id="cd07841">
    <property type="entry name" value="STKc_CDK7"/>
    <property type="match status" value="1"/>
</dbReference>
<dbReference type="FunFam" id="1.10.510.10:FF:000097">
    <property type="entry name" value="Putative cyclin-dependent kinase 7"/>
    <property type="match status" value="1"/>
</dbReference>
<dbReference type="FunFam" id="3.30.200.20:FF:000190">
    <property type="entry name" value="Putative cyclin-dependent kinase 7"/>
    <property type="match status" value="1"/>
</dbReference>
<dbReference type="Gene3D" id="3.30.200.20">
    <property type="entry name" value="Phosphorylase Kinase, domain 1"/>
    <property type="match status" value="1"/>
</dbReference>
<dbReference type="Gene3D" id="1.10.510.10">
    <property type="entry name" value="Transferase(Phosphotransferase) domain 1"/>
    <property type="match status" value="1"/>
</dbReference>
<dbReference type="InterPro" id="IPR050108">
    <property type="entry name" value="CDK"/>
</dbReference>
<dbReference type="InterPro" id="IPR037770">
    <property type="entry name" value="CDK7"/>
</dbReference>
<dbReference type="InterPro" id="IPR011009">
    <property type="entry name" value="Kinase-like_dom_sf"/>
</dbReference>
<dbReference type="InterPro" id="IPR000719">
    <property type="entry name" value="Prot_kinase_dom"/>
</dbReference>
<dbReference type="InterPro" id="IPR017441">
    <property type="entry name" value="Protein_kinase_ATP_BS"/>
</dbReference>
<dbReference type="InterPro" id="IPR008271">
    <property type="entry name" value="Ser/Thr_kinase_AS"/>
</dbReference>
<dbReference type="PANTHER" id="PTHR24056">
    <property type="entry name" value="CELL DIVISION PROTEIN KINASE"/>
    <property type="match status" value="1"/>
</dbReference>
<dbReference type="PANTHER" id="PTHR24056:SF0">
    <property type="entry name" value="CYCLIN-DEPENDENT KINASE 7"/>
    <property type="match status" value="1"/>
</dbReference>
<dbReference type="Pfam" id="PF00069">
    <property type="entry name" value="Pkinase"/>
    <property type="match status" value="1"/>
</dbReference>
<dbReference type="SMART" id="SM00220">
    <property type="entry name" value="S_TKc"/>
    <property type="match status" value="1"/>
</dbReference>
<dbReference type="SUPFAM" id="SSF56112">
    <property type="entry name" value="Protein kinase-like (PK-like)"/>
    <property type="match status" value="1"/>
</dbReference>
<dbReference type="PROSITE" id="PS00107">
    <property type="entry name" value="PROTEIN_KINASE_ATP"/>
    <property type="match status" value="1"/>
</dbReference>
<dbReference type="PROSITE" id="PS50011">
    <property type="entry name" value="PROTEIN_KINASE_DOM"/>
    <property type="match status" value="1"/>
</dbReference>
<dbReference type="PROSITE" id="PS00108">
    <property type="entry name" value="PROTEIN_KINASE_ST"/>
    <property type="match status" value="1"/>
</dbReference>
<feature type="chain" id="PRO_0000085793" description="Cyclin-dependent kinase 7">
    <location>
        <begin position="1" status="less than"/>
        <end position="329" status="greater than"/>
    </location>
</feature>
<feature type="domain" description="Protein kinase" evidence="3">
    <location>
        <begin position="4"/>
        <end position="287"/>
    </location>
</feature>
<feature type="region of interest" description="Disordered" evidence="5">
    <location>
        <begin position="309"/>
        <end position="329"/>
    </location>
</feature>
<feature type="active site" description="Proton acceptor" evidence="3 4">
    <location>
        <position position="129"/>
    </location>
</feature>
<feature type="binding site" evidence="3">
    <location>
        <begin position="10"/>
        <end position="18"/>
    </location>
    <ligand>
        <name>ATP</name>
        <dbReference type="ChEBI" id="CHEBI:30616"/>
    </ligand>
</feature>
<feature type="binding site" evidence="3">
    <location>
        <position position="33"/>
    </location>
    <ligand>
        <name>ATP</name>
        <dbReference type="ChEBI" id="CHEBI:30616"/>
    </ligand>
</feature>
<feature type="modified residue" description="Phosphoserine; by CDK1 and CDK2" evidence="2">
    <location>
        <position position="156"/>
    </location>
</feature>
<feature type="modified residue" description="Phosphothreonine" evidence="7">
    <location>
        <position position="162"/>
    </location>
</feature>
<feature type="modified residue" description="Phosphoserine" evidence="2">
    <location>
        <position position="313"/>
    </location>
</feature>
<feature type="non-terminal residue">
    <location>
        <position position="1"/>
    </location>
</feature>
<feature type="non-terminal residue">
    <location>
        <position position="329"/>
    </location>
</feature>
<reference key="1">
    <citation type="submission" date="1994-12" db="EMBL/GenBank/DDBJ databases">
        <authorList>
            <person name="Wu L."/>
            <person name="Hall F."/>
        </authorList>
    </citation>
    <scope>NUCLEOTIDE SEQUENCE [MRNA]</scope>
    <source>
        <strain>Sprague-Dawley</strain>
        <tissue>Testis</tissue>
    </source>
</reference>
<reference key="2">
    <citation type="journal article" date="2012" name="Nat. Commun.">
        <title>Quantitative maps of protein phosphorylation sites across 14 different rat organs and tissues.</title>
        <authorList>
            <person name="Lundby A."/>
            <person name="Secher A."/>
            <person name="Lage K."/>
            <person name="Nordsborg N.B."/>
            <person name="Dmytriyev A."/>
            <person name="Lundby C."/>
            <person name="Olsen J.V."/>
        </authorList>
    </citation>
    <scope>PHOSPHORYLATION [LARGE SCALE ANALYSIS] AT THR-162</scope>
    <scope>IDENTIFICATION BY MASS SPECTROMETRY [LARGE SCALE ANALYSIS]</scope>
</reference>
<comment type="function">
    <text evidence="2">Serine/threonine kinase involved in cell cycle control and in RNA polymerase II-mediated RNA transcription. Cyclin-dependent kinases (CDKs) are activated by the binding to a cyclin and mediate the progression through the cell cycle. Each different complex controls a specific transition between 2 subsequent phases in the cell cycle. Required for both activation and complex formation of CDK1/cyclin-B during G2-M transition, and for activation of CDK2/cyclins during G1-S transition (but not complex formation). CDK7 is the catalytic subunit of the CDK-activating kinase (CAK) complex. Phosphorylates SPT5/SUPT5H, SF1/NR5A1, POLR2A, p53/TP53, CDK1, CDK2, CDK4, CDK6 and CDK11B/CDK11. Initiates transcription by RNA polymerase II by mediating phosphorylation of POLR2A at 'Ser-5' of the repetitive C-terminal domain (CTD) when POLR2A is in complex with DNA, promoting dissociation from DNA and initiation. CAK activates the cyclin-associated kinases CDK1, CDK2, CDK4 and CDK6 by threonine phosphorylation, thus regulating cell cycle progression. CAK complexed to the core-TFIIH basal transcription factor activates RNA polymerase II by serine phosphorylation of the CTD of POLR2A, allowing its escape from the promoter and elongation of the transcripts. Its expression and activity are constant throughout the cell cycle. Upon DNA damage, triggers p53/TP53 activation by phosphorylation, but is inactivated in turn by p53/TP53; this feedback loop may lead to an arrest of the cell cycle and of the transcription, helping in cell recovery, or to apoptosis. Required for DNA-bound peptides-mediated transcription and cellular growth inhibition.</text>
</comment>
<comment type="catalytic activity">
    <reaction evidence="2">
        <text>L-seryl-[protein] + ATP = O-phospho-L-seryl-[protein] + ADP + H(+)</text>
        <dbReference type="Rhea" id="RHEA:17989"/>
        <dbReference type="Rhea" id="RHEA-COMP:9863"/>
        <dbReference type="Rhea" id="RHEA-COMP:11604"/>
        <dbReference type="ChEBI" id="CHEBI:15378"/>
        <dbReference type="ChEBI" id="CHEBI:29999"/>
        <dbReference type="ChEBI" id="CHEBI:30616"/>
        <dbReference type="ChEBI" id="CHEBI:83421"/>
        <dbReference type="ChEBI" id="CHEBI:456216"/>
        <dbReference type="EC" id="2.7.11.22"/>
    </reaction>
</comment>
<comment type="catalytic activity">
    <reaction evidence="2">
        <text>L-threonyl-[protein] + ATP = O-phospho-L-threonyl-[protein] + ADP + H(+)</text>
        <dbReference type="Rhea" id="RHEA:46608"/>
        <dbReference type="Rhea" id="RHEA-COMP:11060"/>
        <dbReference type="Rhea" id="RHEA-COMP:11605"/>
        <dbReference type="ChEBI" id="CHEBI:15378"/>
        <dbReference type="ChEBI" id="CHEBI:30013"/>
        <dbReference type="ChEBI" id="CHEBI:30616"/>
        <dbReference type="ChEBI" id="CHEBI:61977"/>
        <dbReference type="ChEBI" id="CHEBI:456216"/>
        <dbReference type="EC" id="2.7.11.22"/>
    </reaction>
</comment>
<comment type="catalytic activity">
    <reaction evidence="2">
        <text>[DNA-directed RNA polymerase] + ATP = phospho-[DNA-directed RNA polymerase] + ADP + H(+)</text>
        <dbReference type="Rhea" id="RHEA:10216"/>
        <dbReference type="Rhea" id="RHEA-COMP:11321"/>
        <dbReference type="Rhea" id="RHEA-COMP:11322"/>
        <dbReference type="ChEBI" id="CHEBI:15378"/>
        <dbReference type="ChEBI" id="CHEBI:30616"/>
        <dbReference type="ChEBI" id="CHEBI:43176"/>
        <dbReference type="ChEBI" id="CHEBI:68546"/>
        <dbReference type="ChEBI" id="CHEBI:456216"/>
        <dbReference type="EC" id="2.7.11.23"/>
    </reaction>
</comment>
<comment type="activity regulation">
    <text evidence="1">Phosphorylation at Thr-162 is required for enzymatic activity. The association of p53/TP53 to the CAK complex in response to DNA damage reduces kinase activity toward CDK2 and RNA polymerase II repetitive C-terminal domain (CTD), thus stopping cell cycle progression (By similarity).</text>
</comment>
<comment type="subunit">
    <text evidence="2">Associates primarily with cyclin-H (CCNH) and MAT1 to form the CAK complex. CAK can further associate with the core-TFIIH to form the TFIIH basal transcription factor; this complex is sensitive to UV light. The CAK complex binds to p53/TP53 in response to DNA damage. Interacts with CDK2, SF1/NR5A1, PUF60 and PRKCI (By similarity). Interacts with HINT1 (By similarity).</text>
</comment>
<comment type="subcellular location">
    <subcellularLocation>
        <location evidence="2">Nucleus</location>
    </subcellularLocation>
    <subcellularLocation>
        <location evidence="2">Cytoplasm</location>
    </subcellularLocation>
    <subcellularLocation>
        <location evidence="2">Cytoplasm</location>
        <location evidence="2">Perinuclear region</location>
    </subcellularLocation>
    <text evidence="2">Colocalizes with PRKCI in the cytoplasm and nucleus. Translocates from the nucleus to cytoplasm and perinuclear region in response to DNA-bound peptides (By similarity).</text>
</comment>
<comment type="PTM">
    <text evidence="1">Phosphorylation of Ser-156 during mitosis inactivates the enzyme. Phosphorylation of Thr-162 is required for activity. Phosphorylated at Ser-156 and Thr-162 by CDK2 (By similarity).</text>
</comment>
<comment type="similarity">
    <text evidence="6">Belongs to the protein kinase superfamily. CMGC Ser/Thr protein kinase family. CDC2/CDKX subfamily.</text>
</comment>
<comment type="sequence caution" evidence="6">
    <conflict type="erroneous termination">
        <sequence resource="EMBL-CDS" id="CAA58562"/>
    </conflict>
    <text>Truncated C-terminus.</text>
</comment>
<gene>
    <name type="primary">Cdk7</name>
    <name type="synonym">Cak</name>
    <name type="synonym">Cak1</name>
    <name type="synonym">Mo15</name>
</gene>
<name>CDK7_RAT</name>
<organism>
    <name type="scientific">Rattus norvegicus</name>
    <name type="common">Rat</name>
    <dbReference type="NCBI Taxonomy" id="10116"/>
    <lineage>
        <taxon>Eukaryota</taxon>
        <taxon>Metazoa</taxon>
        <taxon>Chordata</taxon>
        <taxon>Craniata</taxon>
        <taxon>Vertebrata</taxon>
        <taxon>Euteleostomi</taxon>
        <taxon>Mammalia</taxon>
        <taxon>Eutheria</taxon>
        <taxon>Euarchontoglires</taxon>
        <taxon>Glires</taxon>
        <taxon>Rodentia</taxon>
        <taxon>Myomorpha</taxon>
        <taxon>Muroidea</taxon>
        <taxon>Muridae</taxon>
        <taxon>Murinae</taxon>
        <taxon>Rattus</taxon>
    </lineage>
</organism>